<evidence type="ECO:0000250" key="1"/>
<evidence type="ECO:0000269" key="2">
    <source>
    </source>
</evidence>
<evidence type="ECO:0000269" key="3">
    <source>
    </source>
</evidence>
<evidence type="ECO:0000269" key="4">
    <source>
    </source>
</evidence>
<evidence type="ECO:0000269" key="5">
    <source>
    </source>
</evidence>
<evidence type="ECO:0000305" key="6"/>
<evidence type="ECO:0007744" key="7">
    <source>
    </source>
</evidence>
<feature type="initiator methionine" description="Removed" evidence="7">
    <location>
        <position position="1"/>
    </location>
</feature>
<feature type="chain" id="PRO_0000206910" description="Alpha-mannosidase">
    <location>
        <begin position="2"/>
        <end position="1083"/>
    </location>
</feature>
<feature type="active site" description="Nucleophile" evidence="1">
    <location>
        <position position="411"/>
    </location>
</feature>
<feature type="binding site" evidence="1">
    <location>
        <position position="298"/>
    </location>
    <ligand>
        <name>Zn(2+)</name>
        <dbReference type="ChEBI" id="CHEBI:29105"/>
    </ligand>
</feature>
<feature type="binding site" evidence="1">
    <location>
        <position position="300"/>
    </location>
    <ligand>
        <name>Zn(2+)</name>
        <dbReference type="ChEBI" id="CHEBI:29105"/>
    </ligand>
</feature>
<feature type="binding site" evidence="1">
    <location>
        <position position="411"/>
    </location>
    <ligand>
        <name>Zn(2+)</name>
        <dbReference type="ChEBI" id="CHEBI:29105"/>
    </ligand>
</feature>
<feature type="binding site" evidence="1">
    <location>
        <position position="626"/>
    </location>
    <ligand>
        <name>Zn(2+)</name>
        <dbReference type="ChEBI" id="CHEBI:29105"/>
    </ligand>
</feature>
<feature type="modified residue" description="N-acetylserine" evidence="7">
    <location>
        <position position="2"/>
    </location>
</feature>
<feature type="sequence conflict" description="In Ref. 1; AAA34423." evidence="6" ref="1">
    <original>V</original>
    <variation>L</variation>
    <location>
        <position position="786"/>
    </location>
</feature>
<feature type="sequence conflict" description="In Ref. 1; AAA34423." evidence="6" ref="1">
    <original>V</original>
    <variation>A</variation>
    <location>
        <position position="798"/>
    </location>
</feature>
<protein>
    <recommendedName>
        <fullName>Alpha-mannosidase</fullName>
        <ecNumber>3.2.1.24</ecNumber>
    </recommendedName>
    <alternativeName>
        <fullName>Alpha-D-mannoside mannohydrolase</fullName>
    </alternativeName>
</protein>
<comment type="function">
    <text evidence="3">Degrades free oligosaccharides in the vacuole.</text>
</comment>
<comment type="catalytic activity">
    <reaction>
        <text>Hydrolysis of terminal, non-reducing alpha-D-mannose residues in alpha-D-mannosides.</text>
        <dbReference type="EC" id="3.2.1.24"/>
    </reaction>
</comment>
<comment type="cofactor">
    <cofactor evidence="1">
        <name>Zn(2+)</name>
        <dbReference type="ChEBI" id="CHEBI:29105"/>
    </cofactor>
    <text evidence="1">Binds 1 zinc ion per subunit.</text>
</comment>
<comment type="subunit">
    <text>Composed of isoforms with three constituent polypeptides described as [(107 kDa)-n (73 kDa)-(6-n) (31 kDa)-(6-n)], where n is 0-6. The 73 kDa and the 31 kDa polypeptides may be proteolytic derivatives of the 107 kDa polypeptide in the vacuole. Oligomerizes in the cytoplasm and retains its oligomeric form during import into the vacuole.</text>
</comment>
<comment type="interaction">
    <interactant intactId="EBI-10398">
        <id>P22855</id>
    </interactant>
    <interactant intactId="EBI-2571">
        <id>P14904</id>
        <label>APE1</label>
    </interactant>
    <organismsDiffer>false</organismsDiffer>
    <experiments>3</experiments>
</comment>
<comment type="interaction">
    <interactant intactId="EBI-10398">
        <id>P22855</id>
    </interactant>
    <interactant intactId="EBI-36362">
        <id>Q12292</id>
        <label>ATG34</label>
    </interactant>
    <organismsDiffer>false</organismsDiffer>
    <experiments>3</experiments>
</comment>
<comment type="subcellular location">
    <subcellularLocation>
        <location evidence="2 5">Vacuole</location>
    </subcellularLocation>
    <text>Localizes to the inner surface of the vacuolar membrane. Under nutrient-rich conditions, the protein is delivered to the vacuole by the cytoplasm to vacuole targeting (Cvt) pathway. Under starvation conditions, the protein is localized through autophagy.</text>
</comment>
<comment type="PTM">
    <text>The N-terminus is blocked.</text>
</comment>
<comment type="miscellaneous">
    <text>It is not specific for the 1,2-alpha-mannosidic linkage.</text>
</comment>
<comment type="miscellaneous">
    <text evidence="4">Present with 319 molecules/cell in log phase SD medium.</text>
</comment>
<comment type="similarity">
    <text evidence="6">Belongs to the glycosyl hydrolase 38 family.</text>
</comment>
<proteinExistence type="evidence at protein level"/>
<dbReference type="EC" id="3.2.1.24"/>
<dbReference type="EMBL" id="M29146">
    <property type="protein sequence ID" value="AAA34423.1"/>
    <property type="molecule type" value="Genomic_DNA"/>
</dbReference>
<dbReference type="EMBL" id="Z48618">
    <property type="protein sequence ID" value="CAA88536.1"/>
    <property type="molecule type" value="Genomic_DNA"/>
</dbReference>
<dbReference type="EMBL" id="Z72678">
    <property type="protein sequence ID" value="CAA96868.1"/>
    <property type="molecule type" value="Genomic_DNA"/>
</dbReference>
<dbReference type="EMBL" id="BK006941">
    <property type="protein sequence ID" value="DAA07956.1"/>
    <property type="molecule type" value="Genomic_DNA"/>
</dbReference>
<dbReference type="PIR" id="S60420">
    <property type="entry name" value="S53048"/>
</dbReference>
<dbReference type="RefSeq" id="NP_011359.1">
    <property type="nucleotide sequence ID" value="NM_001181021.1"/>
</dbReference>
<dbReference type="PDB" id="5JM0">
    <property type="method" value="EM"/>
    <property type="resolution" value="6.30 A"/>
    <property type="chains" value="A=1-1070"/>
</dbReference>
<dbReference type="PDBsum" id="5JM0"/>
<dbReference type="EMDB" id="EMD-8166"/>
<dbReference type="SMR" id="P22855"/>
<dbReference type="BioGRID" id="33098">
    <property type="interactions" value="55"/>
</dbReference>
<dbReference type="DIP" id="DIP-5497N"/>
<dbReference type="FunCoup" id="P22855">
    <property type="interactions" value="335"/>
</dbReference>
<dbReference type="IntAct" id="P22855">
    <property type="interactions" value="8"/>
</dbReference>
<dbReference type="MINT" id="P22855"/>
<dbReference type="STRING" id="4932.YGL156W"/>
<dbReference type="CAZy" id="GH38">
    <property type="family name" value="Glycoside Hydrolase Family 38"/>
</dbReference>
<dbReference type="GlyGen" id="P22855">
    <property type="glycosylation" value="1 site"/>
</dbReference>
<dbReference type="iPTMnet" id="P22855"/>
<dbReference type="PaxDb" id="4932-YGL156W"/>
<dbReference type="PeptideAtlas" id="P22855"/>
<dbReference type="EnsemblFungi" id="YGL156W_mRNA">
    <property type="protein sequence ID" value="YGL156W"/>
    <property type="gene ID" value="YGL156W"/>
</dbReference>
<dbReference type="GeneID" id="852721"/>
<dbReference type="KEGG" id="sce:YGL156W"/>
<dbReference type="AGR" id="SGD:S000003124"/>
<dbReference type="SGD" id="S000003124">
    <property type="gene designation" value="AMS1"/>
</dbReference>
<dbReference type="VEuPathDB" id="FungiDB:YGL156W"/>
<dbReference type="eggNOG" id="KOG4342">
    <property type="taxonomic scope" value="Eukaryota"/>
</dbReference>
<dbReference type="GeneTree" id="ENSGT01030000234638"/>
<dbReference type="HOGENOM" id="CLU_003442_0_1_1"/>
<dbReference type="InParanoid" id="P22855"/>
<dbReference type="OMA" id="GQYWDAW"/>
<dbReference type="OrthoDB" id="10261055at2759"/>
<dbReference type="BioCyc" id="MetaCyc:YGL156W-MONOMER"/>
<dbReference type="BioCyc" id="YEAST:YGL156W-MONOMER"/>
<dbReference type="Reactome" id="R-SCE-8853383">
    <property type="pathway name" value="Lysosomal oligosaccharide catabolism"/>
</dbReference>
<dbReference type="BioGRID-ORCS" id="852721">
    <property type="hits" value="3 hits in 10 CRISPR screens"/>
</dbReference>
<dbReference type="PRO" id="PR:P22855"/>
<dbReference type="Proteomes" id="UP000002311">
    <property type="component" value="Chromosome VII"/>
</dbReference>
<dbReference type="RNAct" id="P22855">
    <property type="molecule type" value="protein"/>
</dbReference>
<dbReference type="GO" id="GO:0034270">
    <property type="term" value="C:Cvt complex"/>
    <property type="evidence" value="ECO:0000314"/>
    <property type="project" value="SGD"/>
</dbReference>
<dbReference type="GO" id="GO:0000329">
    <property type="term" value="C:fungal-type vacuole membrane"/>
    <property type="evidence" value="ECO:0000314"/>
    <property type="project" value="SGD"/>
</dbReference>
<dbReference type="GO" id="GO:0004559">
    <property type="term" value="F:alpha-mannosidase activity"/>
    <property type="evidence" value="ECO:0000314"/>
    <property type="project" value="SGD"/>
</dbReference>
<dbReference type="GO" id="GO:0030246">
    <property type="term" value="F:carbohydrate binding"/>
    <property type="evidence" value="ECO:0007669"/>
    <property type="project" value="InterPro"/>
</dbReference>
<dbReference type="GO" id="GO:0046872">
    <property type="term" value="F:metal ion binding"/>
    <property type="evidence" value="ECO:0007669"/>
    <property type="project" value="UniProtKB-KW"/>
</dbReference>
<dbReference type="GO" id="GO:0042149">
    <property type="term" value="P:cellular response to glucose starvation"/>
    <property type="evidence" value="ECO:0000315"/>
    <property type="project" value="SGD"/>
</dbReference>
<dbReference type="GO" id="GO:0006995">
    <property type="term" value="P:cellular response to nitrogen starvation"/>
    <property type="evidence" value="ECO:0000315"/>
    <property type="project" value="SGD"/>
</dbReference>
<dbReference type="GO" id="GO:0019309">
    <property type="term" value="P:mannose catabolic process"/>
    <property type="evidence" value="ECO:0000315"/>
    <property type="project" value="SGD"/>
</dbReference>
<dbReference type="GO" id="GO:0009313">
    <property type="term" value="P:oligosaccharide catabolic process"/>
    <property type="evidence" value="ECO:0000315"/>
    <property type="project" value="SGD"/>
</dbReference>
<dbReference type="CDD" id="cd10812">
    <property type="entry name" value="GH38N_AMII_ScAms1_like"/>
    <property type="match status" value="1"/>
</dbReference>
<dbReference type="FunFam" id="1.20.1270.50:FF:000004">
    <property type="entry name" value="alpha-mannosidase 2C1 isoform X1"/>
    <property type="match status" value="1"/>
</dbReference>
<dbReference type="FunFam" id="3.20.110.10:FF:000002">
    <property type="entry name" value="alpha-mannosidase 2C1 isoform X1"/>
    <property type="match status" value="1"/>
</dbReference>
<dbReference type="FunFam" id="2.70.98.30:FF:000001">
    <property type="entry name" value="alpha-mannosidase 2C1 isoform X2"/>
    <property type="match status" value="1"/>
</dbReference>
<dbReference type="Gene3D" id="3.20.110.10">
    <property type="entry name" value="Glycoside hydrolase 38, N terminal domain"/>
    <property type="match status" value="1"/>
</dbReference>
<dbReference type="Gene3D" id="1.20.1270.50">
    <property type="entry name" value="Glycoside hydrolase family 38, central domain"/>
    <property type="match status" value="1"/>
</dbReference>
<dbReference type="Gene3D" id="2.70.98.30">
    <property type="entry name" value="Golgi alpha-mannosidase II, domain 4"/>
    <property type="match status" value="1"/>
</dbReference>
<dbReference type="InterPro" id="IPR054723">
    <property type="entry name" value="Ams1-like_N"/>
</dbReference>
<dbReference type="InterPro" id="IPR011013">
    <property type="entry name" value="Gal_mutarotase_sf_dom"/>
</dbReference>
<dbReference type="InterPro" id="IPR041147">
    <property type="entry name" value="GH38_C"/>
</dbReference>
<dbReference type="InterPro" id="IPR011330">
    <property type="entry name" value="Glyco_hydro/deAcase_b/a-brl"/>
</dbReference>
<dbReference type="InterPro" id="IPR011682">
    <property type="entry name" value="Glyco_hydro_38_C"/>
</dbReference>
<dbReference type="InterPro" id="IPR015341">
    <property type="entry name" value="Glyco_hydro_38_cen"/>
</dbReference>
<dbReference type="InterPro" id="IPR037094">
    <property type="entry name" value="Glyco_hydro_38_cen_sf"/>
</dbReference>
<dbReference type="InterPro" id="IPR000602">
    <property type="entry name" value="Glyco_hydro_38_N"/>
</dbReference>
<dbReference type="InterPro" id="IPR027291">
    <property type="entry name" value="Glyco_hydro_38_N_sf"/>
</dbReference>
<dbReference type="InterPro" id="IPR028995">
    <property type="entry name" value="Glyco_hydro_57/38_cen_sf"/>
</dbReference>
<dbReference type="PANTHER" id="PTHR46017">
    <property type="entry name" value="ALPHA-MANNOSIDASE 2C1"/>
    <property type="match status" value="1"/>
</dbReference>
<dbReference type="PANTHER" id="PTHR46017:SF1">
    <property type="entry name" value="ALPHA-MANNOSIDASE 2C1"/>
    <property type="match status" value="1"/>
</dbReference>
<dbReference type="Pfam" id="PF09261">
    <property type="entry name" value="Alpha-mann_mid"/>
    <property type="match status" value="1"/>
</dbReference>
<dbReference type="Pfam" id="PF22907">
    <property type="entry name" value="Ams1-like_1st"/>
    <property type="match status" value="1"/>
</dbReference>
<dbReference type="Pfam" id="PF17677">
    <property type="entry name" value="Glyco_hydro38C2"/>
    <property type="match status" value="1"/>
</dbReference>
<dbReference type="Pfam" id="PF07748">
    <property type="entry name" value="Glyco_hydro_38C"/>
    <property type="match status" value="1"/>
</dbReference>
<dbReference type="Pfam" id="PF01074">
    <property type="entry name" value="Glyco_hydro_38N"/>
    <property type="match status" value="1"/>
</dbReference>
<dbReference type="SMART" id="SM00872">
    <property type="entry name" value="Alpha-mann_mid"/>
    <property type="match status" value="1"/>
</dbReference>
<dbReference type="SUPFAM" id="SSF88688">
    <property type="entry name" value="Families 57/38 glycoside transferase middle domain"/>
    <property type="match status" value="1"/>
</dbReference>
<dbReference type="SUPFAM" id="SSF74650">
    <property type="entry name" value="Galactose mutarotase-like"/>
    <property type="match status" value="1"/>
</dbReference>
<dbReference type="SUPFAM" id="SSF88713">
    <property type="entry name" value="Glycoside hydrolase/deacetylase"/>
    <property type="match status" value="1"/>
</dbReference>
<keyword id="KW-0002">3D-structure</keyword>
<keyword id="KW-0007">Acetylation</keyword>
<keyword id="KW-0326">Glycosidase</keyword>
<keyword id="KW-0378">Hydrolase</keyword>
<keyword id="KW-0479">Metal-binding</keyword>
<keyword id="KW-1185">Reference proteome</keyword>
<keyword id="KW-0926">Vacuole</keyword>
<keyword id="KW-0862">Zinc</keyword>
<organism>
    <name type="scientific">Saccharomyces cerevisiae (strain ATCC 204508 / S288c)</name>
    <name type="common">Baker's yeast</name>
    <dbReference type="NCBI Taxonomy" id="559292"/>
    <lineage>
        <taxon>Eukaryota</taxon>
        <taxon>Fungi</taxon>
        <taxon>Dikarya</taxon>
        <taxon>Ascomycota</taxon>
        <taxon>Saccharomycotina</taxon>
        <taxon>Saccharomycetes</taxon>
        <taxon>Saccharomycetales</taxon>
        <taxon>Saccharomycetaceae</taxon>
        <taxon>Saccharomyces</taxon>
    </lineage>
</organism>
<accession>P22855</accession>
<accession>D6VTZ5</accession>
<name>MAN1_YEAST</name>
<gene>
    <name type="primary">AMS1</name>
    <name type="ordered locus">YGL156W</name>
    <name type="ORF">G1861</name>
</gene>
<sequence length="1083" mass="124499">MSSEDIIYDPQFKPVQGIYENRLRQFIDTGGDYHDLNLPKFYDKKRISLDHDHVKVWWYQVSFERGSSPVSPDKRPSWKSIIERDKKGELEFREANINQPFGPSWSTTWFKVKISLPEDWVKSNEQLLFQWDCSNEGIVIDPKTLIPVTAFSGGERTEYVLPKTSDGKHFFYIEAGNNGMFGCGAGSTINPPDDNRFFHLRKADIVWPDLDARALYIDFWMLGDAARELPGDSWQKHQARQLGNAVMNLFDPNDRSSVRKCRELLQREYFDSFLESSKVYEQGESQVLTNVYGIGNCHIDTAWLWPFAETRRKIVRSWSSQCTLMDRFPEYKFVASQAQQFKWLLEDHPEFFNKVLIPKIQQSQFFAVGGTWVENDTNIPSGESLARQFFFGQRFFLKHFGLKSKIFWLPDTFGYSSQMPQLCRLSGIDKFLTQKLSWNNINSFPHSTFNWAGIDGSQLLTHMPPGNTYTADSHFGDVLRTAKQNKTPEYYGSGLMLYGKGDGGGGPTEEMLQKMRRIRSMNNRNGNVIPKLQVGITVDEFYDDILKRTNQGHDLPTWSGELYFEFHRGTYTSQAQTKKLMRLSEIKLHDLEWIAAKTSVLYPDSYKYPSKQINELWENVLLCQFHDVLPGSCIEMVYKYEAVPMLHNVVKECTSLIDKTVQFLQSQSKADLVEMRTLTWSKPEKVSEECSLNGSYTSSVTGYDDYIVLANGKLKVIICKKTGVITSITDETLGVEYLDTEHGRNKLGANQFVIYDDKPLGWQAWDTELYSVNQYKYVTKPKKVQVSCNTKEKCAVEVIFQISEKCKIKSVISLNATAVTDAKLSKVDISTTVENWDARNKFLKVEFPVNIRNDFASYETQFGITKRPTHYNTSWDVAKFEVCHHKFADYSEYSKGVSILNDCKYGFSTHGNLMRLSLLRSPKAPDAHADMGTHEIKYAIYPHRGALSSDTVKLAHEFNYCFKYKLPKDIGMNFDDIISISGDENVILSNIKRGEDDSAVKSNYSLNPRDEQSIVVRVYESLGGESFASLNTTLNLKRIEKVDNLEMKVYKSLTATRDESNHAINRIPIKLRPFEIASFRLYF</sequence>
<reference key="1">
    <citation type="journal article" date="1989" name="Biochem. Biophys. Res. Commun.">
        <title>Nucleotide sequence of AMS1, the structure gene of vacuolar alpha-mannosidase of Saccharomyces cerevisiae.</title>
        <authorList>
            <person name="Yoshihisa T."/>
            <person name="Anraku Y."/>
        </authorList>
    </citation>
    <scope>NUCLEOTIDE SEQUENCE [GENOMIC DNA]</scope>
</reference>
<reference key="2">
    <citation type="journal article" date="1995" name="Yeast">
        <title>DNA sequence analysis of a 35 kb segment from Saccharomyces cerevisiae chromosome VII reveals 19 open reading frames including RAD54, ACE1/CUP2, PMR1, RCK1, AMS1 and CAL1/CDC43.</title>
        <authorList>
            <person name="James C.M."/>
            <person name="Indge K.J."/>
            <person name="Oliver S.G."/>
        </authorList>
    </citation>
    <scope>NUCLEOTIDE SEQUENCE [GENOMIC DNA]</scope>
</reference>
<reference key="3">
    <citation type="journal article" date="1997" name="Nature">
        <title>The nucleotide sequence of Saccharomyces cerevisiae chromosome VII.</title>
        <authorList>
            <person name="Tettelin H."/>
            <person name="Agostoni-Carbone M.L."/>
            <person name="Albermann K."/>
            <person name="Albers M."/>
            <person name="Arroyo J."/>
            <person name="Backes U."/>
            <person name="Barreiros T."/>
            <person name="Bertani I."/>
            <person name="Bjourson A.J."/>
            <person name="Brueckner M."/>
            <person name="Bruschi C.V."/>
            <person name="Carignani G."/>
            <person name="Castagnoli L."/>
            <person name="Cerdan E."/>
            <person name="Clemente M.L."/>
            <person name="Coblenz A."/>
            <person name="Coglievina M."/>
            <person name="Coissac E."/>
            <person name="Defoor E."/>
            <person name="Del Bino S."/>
            <person name="Delius H."/>
            <person name="Delneri D."/>
            <person name="de Wergifosse P."/>
            <person name="Dujon B."/>
            <person name="Durand P."/>
            <person name="Entian K.-D."/>
            <person name="Eraso P."/>
            <person name="Escribano V."/>
            <person name="Fabiani L."/>
            <person name="Fartmann B."/>
            <person name="Feroli F."/>
            <person name="Feuermann M."/>
            <person name="Frontali L."/>
            <person name="Garcia-Gonzalez M."/>
            <person name="Garcia-Saez M.I."/>
            <person name="Goffeau A."/>
            <person name="Guerreiro P."/>
            <person name="Hani J."/>
            <person name="Hansen M."/>
            <person name="Hebling U."/>
            <person name="Hernandez K."/>
            <person name="Heumann K."/>
            <person name="Hilger F."/>
            <person name="Hofmann B."/>
            <person name="Indge K.J."/>
            <person name="James C.M."/>
            <person name="Klima R."/>
            <person name="Koetter P."/>
            <person name="Kramer B."/>
            <person name="Kramer W."/>
            <person name="Lauquin G."/>
            <person name="Leuther H."/>
            <person name="Louis E.J."/>
            <person name="Maillier E."/>
            <person name="Marconi A."/>
            <person name="Martegani E."/>
            <person name="Mazon M.J."/>
            <person name="Mazzoni C."/>
            <person name="McReynolds A.D.K."/>
            <person name="Melchioretto P."/>
            <person name="Mewes H.-W."/>
            <person name="Minenkova O."/>
            <person name="Mueller-Auer S."/>
            <person name="Nawrocki A."/>
            <person name="Netter P."/>
            <person name="Neu R."/>
            <person name="Nombela C."/>
            <person name="Oliver S.G."/>
            <person name="Panzeri L."/>
            <person name="Paoluzi S."/>
            <person name="Plevani P."/>
            <person name="Portetelle D."/>
            <person name="Portillo F."/>
            <person name="Potier S."/>
            <person name="Purnelle B."/>
            <person name="Rieger M."/>
            <person name="Riles L."/>
            <person name="Rinaldi T."/>
            <person name="Robben J."/>
            <person name="Rodrigues-Pousada C."/>
            <person name="Rodriguez-Belmonte E."/>
            <person name="Rodriguez-Torres A.M."/>
            <person name="Rose M."/>
            <person name="Ruzzi M."/>
            <person name="Saliola M."/>
            <person name="Sanchez-Perez M."/>
            <person name="Schaefer B."/>
            <person name="Schaefer M."/>
            <person name="Scharfe M."/>
            <person name="Schmidheini T."/>
            <person name="Schreer A."/>
            <person name="Skala J."/>
            <person name="Souciet J.-L."/>
            <person name="Steensma H.Y."/>
            <person name="Talla E."/>
            <person name="Thierry A."/>
            <person name="Vandenbol M."/>
            <person name="van der Aart Q.J.M."/>
            <person name="Van Dyck L."/>
            <person name="Vanoni M."/>
            <person name="Verhasselt P."/>
            <person name="Voet M."/>
            <person name="Volckaert G."/>
            <person name="Wambutt R."/>
            <person name="Watson M.D."/>
            <person name="Weber N."/>
            <person name="Wedler E."/>
            <person name="Wedler H."/>
            <person name="Wipfli P."/>
            <person name="Wolf K."/>
            <person name="Wright L.F."/>
            <person name="Zaccaria P."/>
            <person name="Zimmermann M."/>
            <person name="Zollner A."/>
            <person name="Kleine K."/>
        </authorList>
    </citation>
    <scope>NUCLEOTIDE SEQUENCE [LARGE SCALE GENOMIC DNA]</scope>
    <source>
        <strain>ATCC 204508 / S288c</strain>
    </source>
</reference>
<reference key="4">
    <citation type="journal article" date="2014" name="G3 (Bethesda)">
        <title>The reference genome sequence of Saccharomyces cerevisiae: Then and now.</title>
        <authorList>
            <person name="Engel S.R."/>
            <person name="Dietrich F.S."/>
            <person name="Fisk D.G."/>
            <person name="Binkley G."/>
            <person name="Balakrishnan R."/>
            <person name="Costanzo M.C."/>
            <person name="Dwight S.S."/>
            <person name="Hitz B.C."/>
            <person name="Karra K."/>
            <person name="Nash R.S."/>
            <person name="Weng S."/>
            <person name="Wong E.D."/>
            <person name="Lloyd P."/>
            <person name="Skrzypek M.S."/>
            <person name="Miyasato S.R."/>
            <person name="Simison M."/>
            <person name="Cherry J.M."/>
        </authorList>
    </citation>
    <scope>GENOME REANNOTATION</scope>
    <source>
        <strain>ATCC 204508 / S288c</strain>
    </source>
</reference>
<reference key="5">
    <citation type="journal article" date="1990" name="J. Biol. Chem.">
        <title>A novel pathway of import of alpha-mannosidase, a marker enzyme of vacuolar membrane, in Saccharomyces cerevisiae.</title>
        <authorList>
            <person name="Yoshihisa T."/>
            <person name="Anraku Y."/>
        </authorList>
    </citation>
    <scope>SUBCELLULAR LOCATION</scope>
</reference>
<reference key="6">
    <citation type="journal article" date="2001" name="J. Biol. Chem.">
        <title>Vacuolar localization of oligomeric alpha-mannosidase requires the cytoplasm to vacuole targeting and autophagy pathway components in Saccharomyces cerevisiae.</title>
        <authorList>
            <person name="Hutchins M.U."/>
            <person name="Klionsky D.J."/>
        </authorList>
    </citation>
    <scope>SUBCELLULAR LOCATION</scope>
</reference>
<reference key="7">
    <citation type="journal article" date="2003" name="Biochem. J.">
        <title>Free-oligosaccharide control in the yeast Saccharomyces cerevisiae: roles for peptide:N-glycanase (Png1p) and vacuolar mannosidase (Ams1p).</title>
        <authorList>
            <person name="Chantret I."/>
            <person name="Frenoy J.-P."/>
            <person name="Moore S.E.H."/>
        </authorList>
    </citation>
    <scope>FUNCTION</scope>
</reference>
<reference key="8">
    <citation type="journal article" date="2003" name="Nature">
        <title>Global analysis of protein expression in yeast.</title>
        <authorList>
            <person name="Ghaemmaghami S."/>
            <person name="Huh W.-K."/>
            <person name="Bower K."/>
            <person name="Howson R.W."/>
            <person name="Belle A."/>
            <person name="Dephoure N."/>
            <person name="O'Shea E.K."/>
            <person name="Weissman J.S."/>
        </authorList>
    </citation>
    <scope>LEVEL OF PROTEIN EXPRESSION [LARGE SCALE ANALYSIS]</scope>
</reference>
<reference key="9">
    <citation type="journal article" date="2012" name="Proc. Natl. Acad. Sci. U.S.A.">
        <title>N-terminal acetylome analyses and functional insights of the N-terminal acetyltransferase NatB.</title>
        <authorList>
            <person name="Van Damme P."/>
            <person name="Lasa M."/>
            <person name="Polevoda B."/>
            <person name="Gazquez C."/>
            <person name="Elosegui-Artola A."/>
            <person name="Kim D.S."/>
            <person name="De Juan-Pardo E."/>
            <person name="Demeyer K."/>
            <person name="Hole K."/>
            <person name="Larrea E."/>
            <person name="Timmerman E."/>
            <person name="Prieto J."/>
            <person name="Arnesen T."/>
            <person name="Sherman F."/>
            <person name="Gevaert K."/>
            <person name="Aldabe R."/>
        </authorList>
    </citation>
    <scope>ACETYLATION [LARGE SCALE ANALYSIS] AT SER-2</scope>
    <scope>CLEAVAGE OF INITIATOR METHIONINE [LARGE SCALE ANALYSIS]</scope>
    <scope>IDENTIFICATION BY MASS SPECTROMETRY [LARGE SCALE ANALYSIS]</scope>
</reference>